<feature type="chain" id="PRO_0000238981" description="NADPH oxidase 4">
    <location>
        <begin position="1"/>
        <end position="578"/>
    </location>
</feature>
<feature type="topological domain" description="Cytoplasmic" evidence="3">
    <location>
        <begin position="1"/>
        <end position="16"/>
    </location>
</feature>
<feature type="transmembrane region" description="Helical" evidence="3">
    <location>
        <begin position="17"/>
        <end position="37"/>
    </location>
</feature>
<feature type="topological domain" description="Extracellular" evidence="3">
    <location>
        <begin position="38"/>
        <end position="62"/>
    </location>
</feature>
<feature type="transmembrane region" description="Helical" evidence="3">
    <location>
        <begin position="63"/>
        <end position="83"/>
    </location>
</feature>
<feature type="topological domain" description="Cytoplasmic" evidence="3">
    <location>
        <begin position="84"/>
        <end position="104"/>
    </location>
</feature>
<feature type="transmembrane region" description="Helical" evidence="3">
    <location>
        <begin position="105"/>
        <end position="125"/>
    </location>
</feature>
<feature type="topological domain" description="Extracellular" evidence="3">
    <location>
        <begin position="126"/>
        <end position="154"/>
    </location>
</feature>
<feature type="transmembrane region" description="Helical" evidence="3">
    <location>
        <begin position="155"/>
        <end position="175"/>
    </location>
</feature>
<feature type="topological domain" description="Cytoplasmic" evidence="3">
    <location>
        <begin position="176"/>
        <end position="188"/>
    </location>
</feature>
<feature type="transmembrane region" description="Helical" evidence="3">
    <location>
        <begin position="189"/>
        <end position="209"/>
    </location>
</feature>
<feature type="topological domain" description="Extracellular" evidence="3">
    <location>
        <begin position="210"/>
        <end position="424"/>
    </location>
</feature>
<feature type="transmembrane region" description="Helical" evidence="3">
    <location>
        <begin position="425"/>
        <end position="445"/>
    </location>
</feature>
<feature type="topological domain" description="Cytoplasmic" evidence="3">
    <location>
        <begin position="446"/>
        <end position="578"/>
    </location>
</feature>
<feature type="domain" description="Ferric oxidoreductase">
    <location>
        <begin position="58"/>
        <end position="303"/>
    </location>
</feature>
<feature type="domain" description="FAD-binding FR-type" evidence="4">
    <location>
        <begin position="304"/>
        <end position="419"/>
    </location>
</feature>
<feature type="region of interest" description="E-loop; essential for H2O2 generating catalytic activity" evidence="2">
    <location>
        <begin position="218"/>
        <end position="273"/>
    </location>
</feature>
<feature type="region of interest" description="Mediates interaction with TLR4" evidence="2">
    <location>
        <begin position="248"/>
        <end position="575"/>
    </location>
</feature>
<feature type="glycosylation site" description="N-linked (GlcNAc...) asparagine" evidence="3">
    <location>
        <position position="133"/>
    </location>
</feature>
<feature type="glycosylation site" description="N-linked (GlcNAc...) asparagine" evidence="3">
    <location>
        <position position="230"/>
    </location>
</feature>
<feature type="splice variant" id="VSP_019060" description="In isoform 2." evidence="11">
    <original>DPRKLLFTTIPGLTG</original>
    <variation>VGGVCFSIFCSLVIR</variation>
    <location>
        <begin position="150"/>
        <end position="164"/>
    </location>
</feature>
<feature type="splice variant" id="VSP_019061" description="In isoform 2." evidence="11">
    <location>
        <begin position="165"/>
        <end position="578"/>
    </location>
</feature>
<feature type="splice variant" id="VSP_019062" description="In isoform 4." evidence="10">
    <original>M</original>
    <variation>MLCQKRWQPWHSRVWIYSFFVCSDAACHEDTSKMNHAFLL</variation>
    <location>
        <position position="358"/>
    </location>
</feature>
<feature type="splice variant" id="VSP_019063" description="In isoform 3." evidence="11">
    <original>K</original>
    <variation>FEDQGQDFVPARKQHLHRGAPKALSFFSNGKGYLHFTIMTLKKCCFHGSPLIF</variation>
    <location>
        <position position="540"/>
    </location>
</feature>
<feature type="splice variant" id="VSP_019064" description="In isoform 3." evidence="11">
    <location>
        <begin position="541"/>
        <end position="578"/>
    </location>
</feature>
<feature type="sequence conflict" description="In Ref. 5; BAC39460." evidence="12" ref="5">
    <original>R</original>
    <variation>G</variation>
    <location>
        <position position="298"/>
    </location>
</feature>
<evidence type="ECO:0000250" key="1">
    <source>
        <dbReference type="UniProtKB" id="Q924V1"/>
    </source>
</evidence>
<evidence type="ECO:0000250" key="2">
    <source>
        <dbReference type="UniProtKB" id="Q9NPH5"/>
    </source>
</evidence>
<evidence type="ECO:0000255" key="3"/>
<evidence type="ECO:0000255" key="4">
    <source>
        <dbReference type="PROSITE-ProRule" id="PRU00716"/>
    </source>
</evidence>
<evidence type="ECO:0000269" key="5">
    <source>
    </source>
</evidence>
<evidence type="ECO:0000269" key="6">
    <source>
    </source>
</evidence>
<evidence type="ECO:0000269" key="7">
    <source>
    </source>
</evidence>
<evidence type="ECO:0000269" key="8">
    <source>
    </source>
</evidence>
<evidence type="ECO:0000269" key="9">
    <source>
    </source>
</evidence>
<evidence type="ECO:0000303" key="10">
    <source>
    </source>
</evidence>
<evidence type="ECO:0000303" key="11">
    <source>
    </source>
</evidence>
<evidence type="ECO:0000305" key="12"/>
<sequence length="578" mass="66519">MAVSWRSWLANEGVKHLCLLIWLSLNVLLFWKTFLLYNQGPEYYYIHQMLGLGLCLSRASASVLNLNCSLILLPMCRTVLAYLRGSQKVPSRRTRRLLDKSKTLHITCGVTICIFSGVHVAAHLVNALNFSVNYSEDFLELNAARYQNEDPRKLLFTTIPGLTGVCMVVVLFLMVTASTYAIRVSNYDIFWYTHNLFFVFYMLLLLHVSGGLLKYQTNVDTHPPGCISLNQTSSQNMSIPDYVSEHFHGSLPRGFSKLEDRYQKTLVKICLEEPKFQAHFPQTWIWISGPLCLYCAERLYRCIRSNKPVTIISVINHPSDVMELRMIKENFKARPGQYIILHCPSVSALENHPFTLTMCPTETKATFGVHFKVVGDWTERFRDLLLPPSSQDSEILPFIHSRNYPKLYIDGPFGSPFEESLNYEVSLCVAGGIGVTPFASILNTLLDDWKPYKLRRLYFIWVCRDIQSFQWFADLLCVLHNKFWQENRPDFVNIQLYLSQTDGIQKIIGEKYHTLNSRLFIGRPRWKLLFDEIAKCNRGKTVGVFCCGPSSISKTLHSLSNRNNSYGTKFEYNKESFS</sequence>
<keyword id="KW-0025">Alternative splicing</keyword>
<keyword id="KW-0965">Cell junction</keyword>
<keyword id="KW-1003">Cell membrane</keyword>
<keyword id="KW-0963">Cytoplasm</keyword>
<keyword id="KW-1015">Disulfide bond</keyword>
<keyword id="KW-0256">Endoplasmic reticulum</keyword>
<keyword id="KW-0325">Glycoprotein</keyword>
<keyword id="KW-0472">Membrane</keyword>
<keyword id="KW-0521">NADP</keyword>
<keyword id="KW-0539">Nucleus</keyword>
<keyword id="KW-0560">Oxidoreductase</keyword>
<keyword id="KW-1185">Reference proteome</keyword>
<keyword id="KW-0812">Transmembrane</keyword>
<keyword id="KW-1133">Transmembrane helix</keyword>
<reference key="1">
    <citation type="journal article" date="2000" name="Proc. Natl. Acad. Sci. U.S.A.">
        <title>Identification of renox, an NAD(P)H oxidase in kidney.</title>
        <authorList>
            <person name="Geiszt M."/>
            <person name="Kopp J.B."/>
            <person name="Varnai P."/>
            <person name="Leto T.L."/>
        </authorList>
    </citation>
    <scope>NUCLEOTIDE SEQUENCE [MRNA] (ISOFORM 1)</scope>
    <scope>FUNCTION</scope>
    <scope>TISSUE SPECIFICITY</scope>
    <scope>ACTIVITY REGULATION</scope>
    <scope>CATALYTIC ACTIVITY</scope>
    <source>
        <tissue>Kidney</tissue>
    </source>
</reference>
<reference key="2">
    <citation type="journal article" date="2001" name="J. Biol. Chem.">
        <title>A novel superoxide-producing NAD(P)H oxidase in kidney.</title>
        <authorList>
            <person name="Shiose A."/>
            <person name="Kuroda J."/>
            <person name="Tsuruya K."/>
            <person name="Hirai M."/>
            <person name="Hirakata H."/>
            <person name="Naito S."/>
            <person name="Hattori M."/>
            <person name="Sakaki Y."/>
            <person name="Sumimoto H."/>
        </authorList>
    </citation>
    <scope>NUCLEOTIDE SEQUENCE [MRNA] (ISOFORM 1)</scope>
</reference>
<reference key="3">
    <citation type="journal article" date="2001" name="J. Biol. Chem.">
        <title>A new superoxide-generating oxidase in murine osteoclasts.</title>
        <authorList>
            <person name="Yang S."/>
            <person name="Madyastha P."/>
            <person name="Bingel S."/>
            <person name="Ries W."/>
            <person name="Key L."/>
        </authorList>
    </citation>
    <scope>NUCLEOTIDE SEQUENCE [MRNA] (ISOFORM 1)</scope>
    <scope>FUNCTION</scope>
    <scope>TISSUE SPECIFICITY</scope>
    <scope>CATALYTIC ACTIVITY</scope>
</reference>
<reference key="4">
    <citation type="submission" date="2000-06" db="EMBL/GenBank/DDBJ databases">
        <authorList>
            <person name="Banfi B."/>
            <person name="Maturana A."/>
            <person name="Demaurex N."/>
            <person name="Krause K.-H."/>
        </authorList>
    </citation>
    <scope>NUCLEOTIDE SEQUENCE [MRNA] (ISOFORM 1)</scope>
</reference>
<reference key="5">
    <citation type="journal article" date="2005" name="Science">
        <title>The transcriptional landscape of the mammalian genome.</title>
        <authorList>
            <person name="Carninci P."/>
            <person name="Kasukawa T."/>
            <person name="Katayama S."/>
            <person name="Gough J."/>
            <person name="Frith M.C."/>
            <person name="Maeda N."/>
            <person name="Oyama R."/>
            <person name="Ravasi T."/>
            <person name="Lenhard B."/>
            <person name="Wells C."/>
            <person name="Kodzius R."/>
            <person name="Shimokawa K."/>
            <person name="Bajic V.B."/>
            <person name="Brenner S.E."/>
            <person name="Batalov S."/>
            <person name="Forrest A.R."/>
            <person name="Zavolan M."/>
            <person name="Davis M.J."/>
            <person name="Wilming L.G."/>
            <person name="Aidinis V."/>
            <person name="Allen J.E."/>
            <person name="Ambesi-Impiombato A."/>
            <person name="Apweiler R."/>
            <person name="Aturaliya R.N."/>
            <person name="Bailey T.L."/>
            <person name="Bansal M."/>
            <person name="Baxter L."/>
            <person name="Beisel K.W."/>
            <person name="Bersano T."/>
            <person name="Bono H."/>
            <person name="Chalk A.M."/>
            <person name="Chiu K.P."/>
            <person name="Choudhary V."/>
            <person name="Christoffels A."/>
            <person name="Clutterbuck D.R."/>
            <person name="Crowe M.L."/>
            <person name="Dalla E."/>
            <person name="Dalrymple B.P."/>
            <person name="de Bono B."/>
            <person name="Della Gatta G."/>
            <person name="di Bernardo D."/>
            <person name="Down T."/>
            <person name="Engstrom P."/>
            <person name="Fagiolini M."/>
            <person name="Faulkner G."/>
            <person name="Fletcher C.F."/>
            <person name="Fukushima T."/>
            <person name="Furuno M."/>
            <person name="Futaki S."/>
            <person name="Gariboldi M."/>
            <person name="Georgii-Hemming P."/>
            <person name="Gingeras T.R."/>
            <person name="Gojobori T."/>
            <person name="Green R.E."/>
            <person name="Gustincich S."/>
            <person name="Harbers M."/>
            <person name="Hayashi Y."/>
            <person name="Hensch T.K."/>
            <person name="Hirokawa N."/>
            <person name="Hill D."/>
            <person name="Huminiecki L."/>
            <person name="Iacono M."/>
            <person name="Ikeo K."/>
            <person name="Iwama A."/>
            <person name="Ishikawa T."/>
            <person name="Jakt M."/>
            <person name="Kanapin A."/>
            <person name="Katoh M."/>
            <person name="Kawasawa Y."/>
            <person name="Kelso J."/>
            <person name="Kitamura H."/>
            <person name="Kitano H."/>
            <person name="Kollias G."/>
            <person name="Krishnan S.P."/>
            <person name="Kruger A."/>
            <person name="Kummerfeld S.K."/>
            <person name="Kurochkin I.V."/>
            <person name="Lareau L.F."/>
            <person name="Lazarevic D."/>
            <person name="Lipovich L."/>
            <person name="Liu J."/>
            <person name="Liuni S."/>
            <person name="McWilliam S."/>
            <person name="Madan Babu M."/>
            <person name="Madera M."/>
            <person name="Marchionni L."/>
            <person name="Matsuda H."/>
            <person name="Matsuzawa S."/>
            <person name="Miki H."/>
            <person name="Mignone F."/>
            <person name="Miyake S."/>
            <person name="Morris K."/>
            <person name="Mottagui-Tabar S."/>
            <person name="Mulder N."/>
            <person name="Nakano N."/>
            <person name="Nakauchi H."/>
            <person name="Ng P."/>
            <person name="Nilsson R."/>
            <person name="Nishiguchi S."/>
            <person name="Nishikawa S."/>
            <person name="Nori F."/>
            <person name="Ohara O."/>
            <person name="Okazaki Y."/>
            <person name="Orlando V."/>
            <person name="Pang K.C."/>
            <person name="Pavan W.J."/>
            <person name="Pavesi G."/>
            <person name="Pesole G."/>
            <person name="Petrovsky N."/>
            <person name="Piazza S."/>
            <person name="Reed J."/>
            <person name="Reid J.F."/>
            <person name="Ring B.Z."/>
            <person name="Ringwald M."/>
            <person name="Rost B."/>
            <person name="Ruan Y."/>
            <person name="Salzberg S.L."/>
            <person name="Sandelin A."/>
            <person name="Schneider C."/>
            <person name="Schoenbach C."/>
            <person name="Sekiguchi K."/>
            <person name="Semple C.A."/>
            <person name="Seno S."/>
            <person name="Sessa L."/>
            <person name="Sheng Y."/>
            <person name="Shibata Y."/>
            <person name="Shimada H."/>
            <person name="Shimada K."/>
            <person name="Silva D."/>
            <person name="Sinclair B."/>
            <person name="Sperling S."/>
            <person name="Stupka E."/>
            <person name="Sugiura K."/>
            <person name="Sultana R."/>
            <person name="Takenaka Y."/>
            <person name="Taki K."/>
            <person name="Tammoja K."/>
            <person name="Tan S.L."/>
            <person name="Tang S."/>
            <person name="Taylor M.S."/>
            <person name="Tegner J."/>
            <person name="Teichmann S.A."/>
            <person name="Ueda H.R."/>
            <person name="van Nimwegen E."/>
            <person name="Verardo R."/>
            <person name="Wei C.L."/>
            <person name="Yagi K."/>
            <person name="Yamanishi H."/>
            <person name="Zabarovsky E."/>
            <person name="Zhu S."/>
            <person name="Zimmer A."/>
            <person name="Hide W."/>
            <person name="Bult C."/>
            <person name="Grimmond S.M."/>
            <person name="Teasdale R.D."/>
            <person name="Liu E.T."/>
            <person name="Brusic V."/>
            <person name="Quackenbush J."/>
            <person name="Wahlestedt C."/>
            <person name="Mattick J.S."/>
            <person name="Hume D.A."/>
            <person name="Kai C."/>
            <person name="Sasaki D."/>
            <person name="Tomaru Y."/>
            <person name="Fukuda S."/>
            <person name="Kanamori-Katayama M."/>
            <person name="Suzuki M."/>
            <person name="Aoki J."/>
            <person name="Arakawa T."/>
            <person name="Iida J."/>
            <person name="Imamura K."/>
            <person name="Itoh M."/>
            <person name="Kato T."/>
            <person name="Kawaji H."/>
            <person name="Kawagashira N."/>
            <person name="Kawashima T."/>
            <person name="Kojima M."/>
            <person name="Kondo S."/>
            <person name="Konno H."/>
            <person name="Nakano K."/>
            <person name="Ninomiya N."/>
            <person name="Nishio T."/>
            <person name="Okada M."/>
            <person name="Plessy C."/>
            <person name="Shibata K."/>
            <person name="Shiraki T."/>
            <person name="Suzuki S."/>
            <person name="Tagami M."/>
            <person name="Waki K."/>
            <person name="Watahiki A."/>
            <person name="Okamura-Oho Y."/>
            <person name="Suzuki H."/>
            <person name="Kawai J."/>
            <person name="Hayashizaki Y."/>
        </authorList>
    </citation>
    <scope>NUCLEOTIDE SEQUENCE [LARGE SCALE MRNA] (ISOFORMS 1; 2 AND 3)</scope>
    <source>
        <strain>C57BL/6J</strain>
        <tissue>Heart</tissue>
        <tissue>Liver</tissue>
    </source>
</reference>
<reference key="6">
    <citation type="journal article" date="2004" name="Genome Res.">
        <title>The status, quality, and expansion of the NIH full-length cDNA project: the Mammalian Gene Collection (MGC).</title>
        <authorList>
            <consortium name="The MGC Project Team"/>
        </authorList>
    </citation>
    <scope>NUCLEOTIDE SEQUENCE [LARGE SCALE MRNA] (ISOFORM 4)</scope>
    <source>
        <strain>FVB/N</strain>
        <tissue>Kidney</tissue>
    </source>
</reference>
<reference key="7">
    <citation type="journal article" date="2004" name="Blood">
        <title>Superoxide dismutase-3 promotes full expression of the EPO response to hypoxia.</title>
        <authorList>
            <person name="Suliman H.B."/>
            <person name="Ali M."/>
            <person name="Piantadosi C.A."/>
        </authorList>
    </citation>
    <scope>INDUCTION</scope>
</reference>
<reference key="8">
    <citation type="journal article" date="2005" name="J. Pharm. Pharmacol.">
        <title>Inhibition of Nox-4 activity by plumbagin, a plant-derived bioactive naphthoquinone.</title>
        <authorList>
            <person name="Ding Y."/>
            <person name="Chen Z.-J."/>
            <person name="Liu S."/>
            <person name="Che D."/>
            <person name="Vetter M."/>
            <person name="Chang C.-H."/>
        </authorList>
    </citation>
    <scope>ACTIVITY REGULATION</scope>
    <scope>FUNCTION</scope>
    <scope>CATALYTIC ACTIVITY</scope>
</reference>
<reference key="9">
    <citation type="journal article" date="2005" name="Neuroscience">
        <title>Neuronal expression of the NADPH oxidase NOX4, and its regulation in mouse experimental brain ischemia.</title>
        <authorList>
            <person name="Vallet P."/>
            <person name="Charnay Y."/>
            <person name="Steger K."/>
            <person name="Ogier-Denis E."/>
            <person name="Kovari E."/>
            <person name="Herrmann F."/>
            <person name="Michel J.-P."/>
            <person name="Szanto I."/>
        </authorList>
    </citation>
    <scope>TISSUE SPECIFICITY</scope>
    <scope>INDUCTION</scope>
</reference>
<accession>Q9JHI8</accession>
<accession>Q3TF39</accession>
<accession>Q8C3M1</accession>
<accession>Q8VCA3</accession>
<proteinExistence type="evidence at protein level"/>
<gene>
    <name type="primary">Nox4</name>
    <name type="synonym">Renox</name>
</gene>
<comment type="function">
    <text evidence="2 5 6 8">NADPH oxidase that catalyzes predominantly the reduction of oxygen to H2O2 (By similarity). Can also catalyze to a smaller extent, the reduction of oxygen to superoxide (PubMed:10869423, PubMed:11098048, PubMed:15638999). May function as an oxygen sensor regulating the KCNK3/TASK-1 potassium channel and HIF1A activity (By similarity). May regulate insulin signaling cascade (By similarity). May play a role in apoptosis, bone resorption and lipolysaccharide-mediated activation of NFKB (By similarity). May produce superoxide in the nucleus and play a role in regulating gene expression upon cell stimulation (By similarity). Promotes ferroptosis, reactive oxygen species production and reduced glutathione (GSH) levels by activating NLRP3 inflammasome activation and cytokine release (By similarity).</text>
</comment>
<comment type="catalytic activity">
    <reaction evidence="5 6 8">
        <text>NADPH + 2 O2 = 2 superoxide + NADP(+) + H(+)</text>
        <dbReference type="Rhea" id="RHEA:63180"/>
        <dbReference type="ChEBI" id="CHEBI:15378"/>
        <dbReference type="ChEBI" id="CHEBI:15379"/>
        <dbReference type="ChEBI" id="CHEBI:18421"/>
        <dbReference type="ChEBI" id="CHEBI:57783"/>
        <dbReference type="ChEBI" id="CHEBI:58349"/>
    </reaction>
</comment>
<comment type="catalytic activity">
    <reaction evidence="2">
        <text>NADPH + O2 + H(+) = H2O2 + NADP(+)</text>
        <dbReference type="Rhea" id="RHEA:11260"/>
        <dbReference type="ChEBI" id="CHEBI:15378"/>
        <dbReference type="ChEBI" id="CHEBI:15379"/>
        <dbReference type="ChEBI" id="CHEBI:16240"/>
        <dbReference type="ChEBI" id="CHEBI:57783"/>
        <dbReference type="ChEBI" id="CHEBI:58349"/>
        <dbReference type="EC" id="1.6.3.1"/>
    </reaction>
</comment>
<comment type="cofactor">
    <cofactor evidence="2">
        <name>heme</name>
        <dbReference type="ChEBI" id="CHEBI:30413"/>
    </cofactor>
</comment>
<comment type="activity regulation">
    <text evidence="2 5 8">Activated by insulin. Inhibited by diphenylene iodonium (By similarity). Inhibited by plumbagin. Activated by phorbol 12-myristate 13-acetate (PMA).</text>
</comment>
<comment type="subunit">
    <text evidence="1 2">Interacts with, relocalizes and stabilizes CYBA/p22phox. Interacts with TLR4. Interacts with protein disulfide isomerase (By similarity). Interacts with PPP1R15A (By similarity). Interacts with LRRC8A; this interaction prevents the ubiquitin-mediated degradation of LRRC8A (By similarity).</text>
</comment>
<comment type="subcellular location">
    <subcellularLocation>
        <location evidence="2">Cytoplasm</location>
    </subcellularLocation>
    <subcellularLocation>
        <location evidence="2">Endoplasmic reticulum membrane</location>
        <topology evidence="3">Multi-pass membrane protein</topology>
    </subcellularLocation>
    <subcellularLocation>
        <location evidence="2">Cell membrane</location>
        <topology evidence="3">Multi-pass membrane protein</topology>
    </subcellularLocation>
    <subcellularLocation>
        <location evidence="1">Cell junction</location>
        <location evidence="1">Focal adhesion</location>
    </subcellularLocation>
    <subcellularLocation>
        <location evidence="2">Nucleus</location>
    </subcellularLocation>
</comment>
<comment type="alternative products">
    <event type="alternative splicing"/>
    <isoform>
        <id>Q9JHI8-1</id>
        <name>1</name>
        <sequence type="displayed"/>
    </isoform>
    <isoform>
        <id>Q9JHI8-2</id>
        <name>2</name>
        <sequence type="described" ref="VSP_019060 VSP_019061"/>
    </isoform>
    <isoform>
        <id>Q9JHI8-3</id>
        <name>3</name>
        <sequence type="described" ref="VSP_019063 VSP_019064"/>
    </isoform>
    <isoform>
        <id>Q9JHI8-4</id>
        <name>4</name>
        <sequence type="described" ref="VSP_019062"/>
    </isoform>
</comment>
<comment type="tissue specificity">
    <text evidence="5 6 9">EXpressed in brain, in all layers of the cerebellum, in pyramidal cells of the Ammon horn and in Purkinje cells (at protein level). Expressed in osteoclasts, leukocytes, kidney, liver and lung.</text>
</comment>
<comment type="induction">
    <text evidence="7 9">Upon brain ischemia it is up-regulated in ischemic tissues and more specially in neocapillaries (at protein level). Up-regulated upon hypoxia.</text>
</comment>
<comment type="PTM">
    <text evidence="2">N-glycosylation is required for the function.</text>
</comment>
<comment type="sequence caution" evidence="12">
    <conflict type="frameshift">
        <sequence resource="EMBL" id="BC021378"/>
    </conflict>
</comment>
<name>NOX4_MOUSE</name>
<organism>
    <name type="scientific">Mus musculus</name>
    <name type="common">Mouse</name>
    <dbReference type="NCBI Taxonomy" id="10090"/>
    <lineage>
        <taxon>Eukaryota</taxon>
        <taxon>Metazoa</taxon>
        <taxon>Chordata</taxon>
        <taxon>Craniata</taxon>
        <taxon>Vertebrata</taxon>
        <taxon>Euteleostomi</taxon>
        <taxon>Mammalia</taxon>
        <taxon>Eutheria</taxon>
        <taxon>Euarchontoglires</taxon>
        <taxon>Glires</taxon>
        <taxon>Rodentia</taxon>
        <taxon>Myomorpha</taxon>
        <taxon>Muroidea</taxon>
        <taxon>Muridae</taxon>
        <taxon>Murinae</taxon>
        <taxon>Mus</taxon>
        <taxon>Mus</taxon>
    </lineage>
</organism>
<protein>
    <recommendedName>
        <fullName>NADPH oxidase 4</fullName>
        <ecNumber evidence="2">1.6.3.1</ecNumber>
    </recommendedName>
    <alternativeName>
        <fullName>Kidney oxidase-1</fullName>
        <shortName>KOX-1</shortName>
    </alternativeName>
    <alternativeName>
        <fullName>Kidney superoxide-producing NADPH oxidase</fullName>
    </alternativeName>
    <alternativeName>
        <fullName>Renal NAD(P)H-oxidase</fullName>
    </alternativeName>
    <alternativeName>
        <fullName>Superoxide-generating NADPH oxidase 4</fullName>
    </alternativeName>
</protein>
<dbReference type="EC" id="1.6.3.1" evidence="2"/>
<dbReference type="EMBL" id="AF261944">
    <property type="protein sequence ID" value="AAF87573.1"/>
    <property type="molecule type" value="mRNA"/>
</dbReference>
<dbReference type="EMBL" id="AB041034">
    <property type="protein sequence ID" value="BAA95682.1"/>
    <property type="molecule type" value="mRNA"/>
</dbReference>
<dbReference type="EMBL" id="AB042745">
    <property type="protein sequence ID" value="BAB18134.1"/>
    <property type="molecule type" value="mRNA"/>
</dbReference>
<dbReference type="EMBL" id="AF218723">
    <property type="protein sequence ID" value="AAF43142.1"/>
    <property type="molecule type" value="mRNA"/>
</dbReference>
<dbReference type="EMBL" id="AF276957">
    <property type="protein sequence ID" value="AAK69443.1"/>
    <property type="molecule type" value="mRNA"/>
</dbReference>
<dbReference type="EMBL" id="AK050371">
    <property type="protein sequence ID" value="BAC34215.1"/>
    <property type="molecule type" value="mRNA"/>
</dbReference>
<dbReference type="EMBL" id="AK085509">
    <property type="protein sequence ID" value="BAC39460.1"/>
    <property type="molecule type" value="mRNA"/>
</dbReference>
<dbReference type="EMBL" id="AK169304">
    <property type="protein sequence ID" value="BAE41059.1"/>
    <property type="molecule type" value="mRNA"/>
</dbReference>
<dbReference type="EMBL" id="BC021378">
    <property type="status" value="NOT_ANNOTATED_CDS"/>
    <property type="molecule type" value="mRNA"/>
</dbReference>
<dbReference type="CCDS" id="CCDS21437.1">
    <molecule id="Q9JHI8-1"/>
</dbReference>
<dbReference type="RefSeq" id="NP_056575.1">
    <molecule id="Q9JHI8-1"/>
    <property type="nucleotide sequence ID" value="NM_015760.5"/>
</dbReference>
<dbReference type="RefSeq" id="XP_006508075.1">
    <molecule id="Q9JHI8-4"/>
    <property type="nucleotide sequence ID" value="XM_006508012.2"/>
</dbReference>
<dbReference type="SMR" id="Q9JHI8"/>
<dbReference type="BioGRID" id="206039">
    <property type="interactions" value="8"/>
</dbReference>
<dbReference type="FunCoup" id="Q9JHI8">
    <property type="interactions" value="196"/>
</dbReference>
<dbReference type="STRING" id="10090.ENSMUSP00000032781"/>
<dbReference type="PeroxiBase" id="5966">
    <property type="entry name" value="MmNOx04"/>
</dbReference>
<dbReference type="GlyCosmos" id="Q9JHI8">
    <property type="glycosylation" value="2 sites, No reported glycans"/>
</dbReference>
<dbReference type="GlyGen" id="Q9JHI8">
    <property type="glycosylation" value="2 sites"/>
</dbReference>
<dbReference type="iPTMnet" id="Q9JHI8"/>
<dbReference type="PhosphoSitePlus" id="Q9JHI8"/>
<dbReference type="PaxDb" id="10090-ENSMUSP00000032781"/>
<dbReference type="ProteomicsDB" id="252995">
    <molecule id="Q9JHI8-1"/>
</dbReference>
<dbReference type="ProteomicsDB" id="252997">
    <molecule id="Q9JHI8-3"/>
</dbReference>
<dbReference type="ProteomicsDB" id="252998">
    <molecule id="Q9JHI8-4"/>
</dbReference>
<dbReference type="ABCD" id="Q9JHI8">
    <property type="antibodies" value="1 sequenced antibody"/>
</dbReference>
<dbReference type="Antibodypedia" id="17747">
    <property type="antibodies" value="618 antibodies from 38 providers"/>
</dbReference>
<dbReference type="DNASU" id="50490"/>
<dbReference type="Ensembl" id="ENSMUST00000032781.14">
    <molecule id="Q9JHI8-1"/>
    <property type="protein sequence ID" value="ENSMUSP00000032781.8"/>
    <property type="gene ID" value="ENSMUSG00000030562.18"/>
</dbReference>
<dbReference type="Ensembl" id="ENSMUST00000068829.13">
    <molecule id="Q9JHI8-3"/>
    <property type="protein sequence ID" value="ENSMUSP00000070039.6"/>
    <property type="gene ID" value="ENSMUSG00000030562.18"/>
</dbReference>
<dbReference type="GeneID" id="50490"/>
<dbReference type="KEGG" id="mmu:50490"/>
<dbReference type="UCSC" id="uc009ifj.2">
    <molecule id="Q9JHI8-2"/>
    <property type="organism name" value="mouse"/>
</dbReference>
<dbReference type="UCSC" id="uc009ifl.2">
    <molecule id="Q9JHI8-1"/>
    <property type="organism name" value="mouse"/>
</dbReference>
<dbReference type="UCSC" id="uc009ifm.2">
    <molecule id="Q9JHI8-4"/>
    <property type="organism name" value="mouse"/>
</dbReference>
<dbReference type="AGR" id="MGI:1354184"/>
<dbReference type="CTD" id="50507"/>
<dbReference type="MGI" id="MGI:1354184">
    <property type="gene designation" value="Nox4"/>
</dbReference>
<dbReference type="VEuPathDB" id="HostDB:ENSMUSG00000030562"/>
<dbReference type="eggNOG" id="KOG0039">
    <property type="taxonomic scope" value="Eukaryota"/>
</dbReference>
<dbReference type="GeneTree" id="ENSGT00940000159621"/>
<dbReference type="HOGENOM" id="CLU_005646_3_1_1"/>
<dbReference type="InParanoid" id="Q9JHI8"/>
<dbReference type="OMA" id="AFWYTHQ"/>
<dbReference type="OrthoDB" id="26742at9989"/>
<dbReference type="PhylomeDB" id="Q9JHI8"/>
<dbReference type="TreeFam" id="TF105354"/>
<dbReference type="BRENDA" id="1.6.3.1">
    <property type="organism ID" value="3474"/>
</dbReference>
<dbReference type="Reactome" id="R-MMU-3299685">
    <property type="pathway name" value="Detoxification of Reactive Oxygen Species"/>
</dbReference>
<dbReference type="BioGRID-ORCS" id="50490">
    <property type="hits" value="3 hits in 81 CRISPR screens"/>
</dbReference>
<dbReference type="ChiTaRS" id="Nox4">
    <property type="organism name" value="mouse"/>
</dbReference>
<dbReference type="PRO" id="PR:Q9JHI8"/>
<dbReference type="Proteomes" id="UP000000589">
    <property type="component" value="Chromosome 7"/>
</dbReference>
<dbReference type="RNAct" id="Q9JHI8">
    <property type="molecule type" value="protein"/>
</dbReference>
<dbReference type="Bgee" id="ENSMUSG00000030562">
    <property type="expression patterns" value="Expressed in adult mammalian kidney and 153 other cell types or tissues"/>
</dbReference>
<dbReference type="ExpressionAtlas" id="Q9JHI8">
    <property type="expression patterns" value="baseline and differential"/>
</dbReference>
<dbReference type="GO" id="GO:0071944">
    <property type="term" value="C:cell periphery"/>
    <property type="evidence" value="ECO:0000314"/>
    <property type="project" value="UniProtKB"/>
</dbReference>
<dbReference type="GO" id="GO:0005783">
    <property type="term" value="C:endoplasmic reticulum"/>
    <property type="evidence" value="ECO:0000250"/>
    <property type="project" value="UniProtKB"/>
</dbReference>
<dbReference type="GO" id="GO:0005789">
    <property type="term" value="C:endoplasmic reticulum membrane"/>
    <property type="evidence" value="ECO:0007669"/>
    <property type="project" value="UniProtKB-SubCell"/>
</dbReference>
<dbReference type="GO" id="GO:0005925">
    <property type="term" value="C:focal adhesion"/>
    <property type="evidence" value="ECO:0007669"/>
    <property type="project" value="UniProtKB-SubCell"/>
</dbReference>
<dbReference type="GO" id="GO:0005739">
    <property type="term" value="C:mitochondrion"/>
    <property type="evidence" value="ECO:0000314"/>
    <property type="project" value="CACAO"/>
</dbReference>
<dbReference type="GO" id="GO:0005634">
    <property type="term" value="C:nucleus"/>
    <property type="evidence" value="ECO:0007669"/>
    <property type="project" value="UniProtKB-SubCell"/>
</dbReference>
<dbReference type="GO" id="GO:0048471">
    <property type="term" value="C:perinuclear region of cytoplasm"/>
    <property type="evidence" value="ECO:0000314"/>
    <property type="project" value="UniProtKB"/>
</dbReference>
<dbReference type="GO" id="GO:0005886">
    <property type="term" value="C:plasma membrane"/>
    <property type="evidence" value="ECO:0000250"/>
    <property type="project" value="UniProtKB"/>
</dbReference>
<dbReference type="GO" id="GO:0020037">
    <property type="term" value="F:heme binding"/>
    <property type="evidence" value="ECO:0000250"/>
    <property type="project" value="UniProtKB"/>
</dbReference>
<dbReference type="GO" id="GO:0072341">
    <property type="term" value="F:modified amino acid binding"/>
    <property type="evidence" value="ECO:0007669"/>
    <property type="project" value="Ensembl"/>
</dbReference>
<dbReference type="GO" id="GO:0016174">
    <property type="term" value="F:NAD(P)H oxidase H2O2-forming activity"/>
    <property type="evidence" value="ECO:0000250"/>
    <property type="project" value="UniProtKB"/>
</dbReference>
<dbReference type="GO" id="GO:0106294">
    <property type="term" value="F:NADPH oxidase H202-forming activity"/>
    <property type="evidence" value="ECO:0007669"/>
    <property type="project" value="RHEA"/>
</dbReference>
<dbReference type="GO" id="GO:1990782">
    <property type="term" value="F:protein tyrosine kinase binding"/>
    <property type="evidence" value="ECO:0000353"/>
    <property type="project" value="ARUK-UCL"/>
</dbReference>
<dbReference type="GO" id="GO:0016175">
    <property type="term" value="F:superoxide-generating NAD(P)H oxidase activity"/>
    <property type="evidence" value="ECO:0000315"/>
    <property type="project" value="UniProtKB"/>
</dbReference>
<dbReference type="GO" id="GO:0106292">
    <property type="term" value="F:superoxide-generating NADPH oxidase activity"/>
    <property type="evidence" value="ECO:0007669"/>
    <property type="project" value="RHEA"/>
</dbReference>
<dbReference type="GO" id="GO:0045453">
    <property type="term" value="P:bone resorption"/>
    <property type="evidence" value="ECO:0000315"/>
    <property type="project" value="MGI"/>
</dbReference>
<dbReference type="GO" id="GO:0055007">
    <property type="term" value="P:cardiac muscle cell differentiation"/>
    <property type="evidence" value="ECO:0000315"/>
    <property type="project" value="MGI"/>
</dbReference>
<dbReference type="GO" id="GO:0000902">
    <property type="term" value="P:cell morphogenesis"/>
    <property type="evidence" value="ECO:0000315"/>
    <property type="project" value="UniProtKB"/>
</dbReference>
<dbReference type="GO" id="GO:0071333">
    <property type="term" value="P:cellular response to glucose stimulus"/>
    <property type="evidence" value="ECO:0000270"/>
    <property type="project" value="UniProtKB"/>
</dbReference>
<dbReference type="GO" id="GO:0010467">
    <property type="term" value="P:gene expression"/>
    <property type="evidence" value="ECO:0007669"/>
    <property type="project" value="Ensembl"/>
</dbReference>
<dbReference type="GO" id="GO:0003015">
    <property type="term" value="P:heart process"/>
    <property type="evidence" value="ECO:0000316"/>
    <property type="project" value="ARUK-UCL"/>
</dbReference>
<dbReference type="GO" id="GO:0050667">
    <property type="term" value="P:homocysteine metabolic process"/>
    <property type="evidence" value="ECO:0007669"/>
    <property type="project" value="Ensembl"/>
</dbReference>
<dbReference type="GO" id="GO:0035556">
    <property type="term" value="P:intracellular signal transduction"/>
    <property type="evidence" value="ECO:0000314"/>
    <property type="project" value="ARUK-UCL"/>
</dbReference>
<dbReference type="GO" id="GO:0008285">
    <property type="term" value="P:negative regulation of cell population proliferation"/>
    <property type="evidence" value="ECO:0000315"/>
    <property type="project" value="UniProtKB"/>
</dbReference>
<dbReference type="GO" id="GO:2000573">
    <property type="term" value="P:positive regulation of DNA biosynthetic process"/>
    <property type="evidence" value="ECO:0000315"/>
    <property type="project" value="UniProtKB"/>
</dbReference>
<dbReference type="GO" id="GO:0070374">
    <property type="term" value="P:positive regulation of ERK1 and ERK2 cascade"/>
    <property type="evidence" value="ECO:0000315"/>
    <property type="project" value="UniProtKB"/>
</dbReference>
<dbReference type="GO" id="GO:0043406">
    <property type="term" value="P:positive regulation of MAP kinase activity"/>
    <property type="evidence" value="ECO:0000315"/>
    <property type="project" value="UniProtKB"/>
</dbReference>
<dbReference type="GO" id="GO:0051897">
    <property type="term" value="P:positive regulation of phosphatidylinositol 3-kinase/protein kinase B signal transduction"/>
    <property type="evidence" value="ECO:0000315"/>
    <property type="project" value="UniProtKB"/>
</dbReference>
<dbReference type="GO" id="GO:0072593">
    <property type="term" value="P:reactive oxygen species metabolic process"/>
    <property type="evidence" value="ECO:0000315"/>
    <property type="project" value="UniProtKB"/>
</dbReference>
<dbReference type="GO" id="GO:0042554">
    <property type="term" value="P:superoxide anion generation"/>
    <property type="evidence" value="ECO:0000314"/>
    <property type="project" value="UniProtKB"/>
</dbReference>
<dbReference type="CDD" id="cd06186">
    <property type="entry name" value="NOX_Duox_like_FAD_NADP"/>
    <property type="match status" value="1"/>
</dbReference>
<dbReference type="FunFam" id="2.40.30.10:FF:000183">
    <property type="entry name" value="NADPH oxidase 4"/>
    <property type="match status" value="1"/>
</dbReference>
<dbReference type="FunFam" id="3.40.50.80:FF:000015">
    <property type="entry name" value="NADPH oxidase 4"/>
    <property type="match status" value="1"/>
</dbReference>
<dbReference type="Gene3D" id="3.40.50.80">
    <property type="entry name" value="Nucleotide-binding domain of ferredoxin-NADP reductase (FNR) module"/>
    <property type="match status" value="1"/>
</dbReference>
<dbReference type="Gene3D" id="2.40.30.10">
    <property type="entry name" value="Translation factors"/>
    <property type="match status" value="1"/>
</dbReference>
<dbReference type="InterPro" id="IPR000778">
    <property type="entry name" value="Cyt_b245_heavy_chain"/>
</dbReference>
<dbReference type="InterPro" id="IPR013112">
    <property type="entry name" value="FAD-bd_8"/>
</dbReference>
<dbReference type="InterPro" id="IPR017927">
    <property type="entry name" value="FAD-bd_FR_type"/>
</dbReference>
<dbReference type="InterPro" id="IPR013130">
    <property type="entry name" value="Fe3_Rdtase_TM_dom"/>
</dbReference>
<dbReference type="InterPro" id="IPR013121">
    <property type="entry name" value="Fe_red_NAD-bd_6"/>
</dbReference>
<dbReference type="InterPro" id="IPR039261">
    <property type="entry name" value="FNR_nucleotide-bd"/>
</dbReference>
<dbReference type="InterPro" id="IPR050369">
    <property type="entry name" value="RBOH/FRE"/>
</dbReference>
<dbReference type="InterPro" id="IPR017938">
    <property type="entry name" value="Riboflavin_synthase-like_b-brl"/>
</dbReference>
<dbReference type="PANTHER" id="PTHR11972">
    <property type="entry name" value="NADPH OXIDASE"/>
    <property type="match status" value="1"/>
</dbReference>
<dbReference type="PANTHER" id="PTHR11972:SF206">
    <property type="entry name" value="NADPH OXIDASE 4"/>
    <property type="match status" value="1"/>
</dbReference>
<dbReference type="Pfam" id="PF08022">
    <property type="entry name" value="FAD_binding_8"/>
    <property type="match status" value="1"/>
</dbReference>
<dbReference type="Pfam" id="PF01794">
    <property type="entry name" value="Ferric_reduct"/>
    <property type="match status" value="1"/>
</dbReference>
<dbReference type="Pfam" id="PF08030">
    <property type="entry name" value="NAD_binding_6"/>
    <property type="match status" value="1"/>
</dbReference>
<dbReference type="PRINTS" id="PR00466">
    <property type="entry name" value="GP91PHOX"/>
</dbReference>
<dbReference type="SUPFAM" id="SSF52343">
    <property type="entry name" value="Ferredoxin reductase-like, C-terminal NADP-linked domain"/>
    <property type="match status" value="1"/>
</dbReference>
<dbReference type="SUPFAM" id="SSF63380">
    <property type="entry name" value="Riboflavin synthase domain-like"/>
    <property type="match status" value="1"/>
</dbReference>
<dbReference type="PROSITE" id="PS51384">
    <property type="entry name" value="FAD_FR"/>
    <property type="match status" value="1"/>
</dbReference>